<keyword id="KW-0963">Cytoplasm</keyword>
<keyword id="KW-0369">Histidine metabolism</keyword>
<keyword id="KW-0378">Hydrolase</keyword>
<keyword id="KW-0408">Iron</keyword>
<keyword id="KW-0479">Metal-binding</keyword>
<keyword id="KW-1185">Reference proteome</keyword>
<keyword id="KW-0862">Zinc</keyword>
<accession>Q87UL9</accession>
<sequence length="401" mass="43115">MKTLWKHCHIASMAHGKYSIIEDAAIVTSGALIEWIGPQAELAEPEHDNCIDLGGAWVTPGLIDCHTHTVFGGNRSGEFEQRLQGVSYAEIAAAGGGIASTVRATRAASEDELYASAERRLRHLLKDGVTTVEMKSGYGLDLENERKILRVIRRLGNTQPVTVRATCLAAHALPPEYADRADDFINHICNEMLPALAAEGLVDAVDAFCEYLAFSPEQVERVFITAGQLALPVKLHAEQLSSLGGSSLAARYNALSADHLEFMTEDDAIAMAAAGTVAVLLPGAFYFLRETQLPPMDALRKHGVPIAISTDLNPGTSPGLSLRLMLNMACTLFRMTPEEALAGVTFNAAKALGMSATHGSLEVGKVADFVAWNIERPADLGYWLGGDLDKRIVRHGVESSI</sequence>
<name>HUTI_PSESM</name>
<protein>
    <recommendedName>
        <fullName evidence="1">Imidazolonepropionase</fullName>
        <ecNumber evidence="1">3.5.2.7</ecNumber>
    </recommendedName>
    <alternativeName>
        <fullName evidence="1">Imidazolone-5-propionate hydrolase</fullName>
    </alternativeName>
</protein>
<comment type="function">
    <text evidence="1">Catalyzes the hydrolytic cleavage of the carbon-nitrogen bond in imidazolone-5-propanoate to yield N-formimidoyl-L-glutamate. It is the third step in the universal histidine degradation pathway.</text>
</comment>
<comment type="catalytic activity">
    <reaction evidence="1">
        <text>4-imidazolone-5-propanoate + H2O = N-formimidoyl-L-glutamate</text>
        <dbReference type="Rhea" id="RHEA:23660"/>
        <dbReference type="ChEBI" id="CHEBI:15377"/>
        <dbReference type="ChEBI" id="CHEBI:58928"/>
        <dbReference type="ChEBI" id="CHEBI:77893"/>
        <dbReference type="EC" id="3.5.2.7"/>
    </reaction>
</comment>
<comment type="cofactor">
    <cofactor evidence="1">
        <name>Zn(2+)</name>
        <dbReference type="ChEBI" id="CHEBI:29105"/>
    </cofactor>
    <cofactor evidence="1">
        <name>Fe(3+)</name>
        <dbReference type="ChEBI" id="CHEBI:29034"/>
    </cofactor>
    <text evidence="1">Binds 1 zinc or iron ion per subunit.</text>
</comment>
<comment type="pathway">
    <text evidence="1">Amino-acid degradation; L-histidine degradation into L-glutamate; N-formimidoyl-L-glutamate from L-histidine: step 3/3.</text>
</comment>
<comment type="subcellular location">
    <subcellularLocation>
        <location evidence="1">Cytoplasm</location>
    </subcellularLocation>
</comment>
<comment type="similarity">
    <text evidence="1">Belongs to the metallo-dependent hydrolases superfamily. HutI family.</text>
</comment>
<reference key="1">
    <citation type="journal article" date="2003" name="Proc. Natl. Acad. Sci. U.S.A.">
        <title>The complete genome sequence of the Arabidopsis and tomato pathogen Pseudomonas syringae pv. tomato DC3000.</title>
        <authorList>
            <person name="Buell C.R."/>
            <person name="Joardar V."/>
            <person name="Lindeberg M."/>
            <person name="Selengut J."/>
            <person name="Paulsen I.T."/>
            <person name="Gwinn M.L."/>
            <person name="Dodson R.J."/>
            <person name="DeBoy R.T."/>
            <person name="Durkin A.S."/>
            <person name="Kolonay J.F."/>
            <person name="Madupu R."/>
            <person name="Daugherty S.C."/>
            <person name="Brinkac L.M."/>
            <person name="Beanan M.J."/>
            <person name="Haft D.H."/>
            <person name="Nelson W.C."/>
            <person name="Davidsen T.M."/>
            <person name="Zafar N."/>
            <person name="Zhou L."/>
            <person name="Liu J."/>
            <person name="Yuan Q."/>
            <person name="Khouri H.M."/>
            <person name="Fedorova N.B."/>
            <person name="Tran B."/>
            <person name="Russell D."/>
            <person name="Berry K.J."/>
            <person name="Utterback T.R."/>
            <person name="Van Aken S.E."/>
            <person name="Feldblyum T.V."/>
            <person name="D'Ascenzo M."/>
            <person name="Deng W.-L."/>
            <person name="Ramos A.R."/>
            <person name="Alfano J.R."/>
            <person name="Cartinhour S."/>
            <person name="Chatterjee A.K."/>
            <person name="Delaney T.P."/>
            <person name="Lazarowitz S.G."/>
            <person name="Martin G.B."/>
            <person name="Schneider D.J."/>
            <person name="Tang X."/>
            <person name="Bender C.L."/>
            <person name="White O."/>
            <person name="Fraser C.M."/>
            <person name="Collmer A."/>
        </authorList>
    </citation>
    <scope>NUCLEOTIDE SEQUENCE [LARGE SCALE GENOMIC DNA]</scope>
    <source>
        <strain>ATCC BAA-871 / DC3000</strain>
    </source>
</reference>
<dbReference type="EC" id="3.5.2.7" evidence="1"/>
<dbReference type="EMBL" id="AE016853">
    <property type="protein sequence ID" value="AAO58703.1"/>
    <property type="molecule type" value="Genomic_DNA"/>
</dbReference>
<dbReference type="RefSeq" id="NP_795008.1">
    <property type="nucleotide sequence ID" value="NC_004578.1"/>
</dbReference>
<dbReference type="RefSeq" id="WP_011105402.1">
    <property type="nucleotide sequence ID" value="NC_004578.1"/>
</dbReference>
<dbReference type="SMR" id="Q87UL9"/>
<dbReference type="STRING" id="223283.PSPTO_5277"/>
<dbReference type="GeneID" id="1186962"/>
<dbReference type="KEGG" id="pst:PSPTO_5277"/>
<dbReference type="PATRIC" id="fig|223283.9.peg.5401"/>
<dbReference type="eggNOG" id="COG1228">
    <property type="taxonomic scope" value="Bacteria"/>
</dbReference>
<dbReference type="HOGENOM" id="CLU_041647_0_0_6"/>
<dbReference type="OrthoDB" id="9776455at2"/>
<dbReference type="PhylomeDB" id="Q87UL9"/>
<dbReference type="UniPathway" id="UPA00379">
    <property type="reaction ID" value="UER00551"/>
</dbReference>
<dbReference type="Proteomes" id="UP000002515">
    <property type="component" value="Chromosome"/>
</dbReference>
<dbReference type="GO" id="GO:0005737">
    <property type="term" value="C:cytoplasm"/>
    <property type="evidence" value="ECO:0007669"/>
    <property type="project" value="UniProtKB-SubCell"/>
</dbReference>
<dbReference type="GO" id="GO:0050480">
    <property type="term" value="F:imidazolonepropionase activity"/>
    <property type="evidence" value="ECO:0007669"/>
    <property type="project" value="UniProtKB-UniRule"/>
</dbReference>
<dbReference type="GO" id="GO:0005506">
    <property type="term" value="F:iron ion binding"/>
    <property type="evidence" value="ECO:0007669"/>
    <property type="project" value="UniProtKB-UniRule"/>
</dbReference>
<dbReference type="GO" id="GO:0008270">
    <property type="term" value="F:zinc ion binding"/>
    <property type="evidence" value="ECO:0007669"/>
    <property type="project" value="UniProtKB-UniRule"/>
</dbReference>
<dbReference type="GO" id="GO:0019556">
    <property type="term" value="P:L-histidine catabolic process to glutamate and formamide"/>
    <property type="evidence" value="ECO:0007669"/>
    <property type="project" value="UniProtKB-UniPathway"/>
</dbReference>
<dbReference type="GO" id="GO:0019557">
    <property type="term" value="P:L-histidine catabolic process to glutamate and formate"/>
    <property type="evidence" value="ECO:0007669"/>
    <property type="project" value="UniProtKB-UniPathway"/>
</dbReference>
<dbReference type="CDD" id="cd01296">
    <property type="entry name" value="Imidazolone-5PH"/>
    <property type="match status" value="1"/>
</dbReference>
<dbReference type="FunFam" id="3.20.20.140:FF:000007">
    <property type="entry name" value="Imidazolonepropionase"/>
    <property type="match status" value="1"/>
</dbReference>
<dbReference type="Gene3D" id="3.20.20.140">
    <property type="entry name" value="Metal-dependent hydrolases"/>
    <property type="match status" value="1"/>
</dbReference>
<dbReference type="Gene3D" id="2.30.40.10">
    <property type="entry name" value="Urease, subunit C, domain 1"/>
    <property type="match status" value="1"/>
</dbReference>
<dbReference type="HAMAP" id="MF_00372">
    <property type="entry name" value="HutI"/>
    <property type="match status" value="1"/>
</dbReference>
<dbReference type="InterPro" id="IPR006680">
    <property type="entry name" value="Amidohydro-rel"/>
</dbReference>
<dbReference type="InterPro" id="IPR005920">
    <property type="entry name" value="HutI"/>
</dbReference>
<dbReference type="InterPro" id="IPR011059">
    <property type="entry name" value="Metal-dep_hydrolase_composite"/>
</dbReference>
<dbReference type="InterPro" id="IPR032466">
    <property type="entry name" value="Metal_Hydrolase"/>
</dbReference>
<dbReference type="NCBIfam" id="TIGR01224">
    <property type="entry name" value="hutI"/>
    <property type="match status" value="1"/>
</dbReference>
<dbReference type="PANTHER" id="PTHR42752">
    <property type="entry name" value="IMIDAZOLONEPROPIONASE"/>
    <property type="match status" value="1"/>
</dbReference>
<dbReference type="PANTHER" id="PTHR42752:SF1">
    <property type="entry name" value="IMIDAZOLONEPROPIONASE-RELATED"/>
    <property type="match status" value="1"/>
</dbReference>
<dbReference type="Pfam" id="PF01979">
    <property type="entry name" value="Amidohydro_1"/>
    <property type="match status" value="1"/>
</dbReference>
<dbReference type="SUPFAM" id="SSF51338">
    <property type="entry name" value="Composite domain of metallo-dependent hydrolases"/>
    <property type="match status" value="1"/>
</dbReference>
<dbReference type="SUPFAM" id="SSF51556">
    <property type="entry name" value="Metallo-dependent hydrolases"/>
    <property type="match status" value="1"/>
</dbReference>
<organism>
    <name type="scientific">Pseudomonas syringae pv. tomato (strain ATCC BAA-871 / DC3000)</name>
    <dbReference type="NCBI Taxonomy" id="223283"/>
    <lineage>
        <taxon>Bacteria</taxon>
        <taxon>Pseudomonadati</taxon>
        <taxon>Pseudomonadota</taxon>
        <taxon>Gammaproteobacteria</taxon>
        <taxon>Pseudomonadales</taxon>
        <taxon>Pseudomonadaceae</taxon>
        <taxon>Pseudomonas</taxon>
    </lineage>
</organism>
<proteinExistence type="inferred from homology"/>
<feature type="chain" id="PRO_0000160952" description="Imidazolonepropionase">
    <location>
        <begin position="1"/>
        <end position="401"/>
    </location>
</feature>
<feature type="binding site" evidence="1">
    <location>
        <position position="66"/>
    </location>
    <ligand>
        <name>Fe(3+)</name>
        <dbReference type="ChEBI" id="CHEBI:29034"/>
    </ligand>
</feature>
<feature type="binding site" evidence="1">
    <location>
        <position position="66"/>
    </location>
    <ligand>
        <name>Zn(2+)</name>
        <dbReference type="ChEBI" id="CHEBI:29105"/>
    </ligand>
</feature>
<feature type="binding site" evidence="1">
    <location>
        <position position="68"/>
    </location>
    <ligand>
        <name>Fe(3+)</name>
        <dbReference type="ChEBI" id="CHEBI:29034"/>
    </ligand>
</feature>
<feature type="binding site" evidence="1">
    <location>
        <position position="68"/>
    </location>
    <ligand>
        <name>Zn(2+)</name>
        <dbReference type="ChEBI" id="CHEBI:29105"/>
    </ligand>
</feature>
<feature type="binding site" evidence="1">
    <location>
        <position position="75"/>
    </location>
    <ligand>
        <name>4-imidazolone-5-propanoate</name>
        <dbReference type="ChEBI" id="CHEBI:77893"/>
    </ligand>
</feature>
<feature type="binding site" evidence="1">
    <location>
        <position position="138"/>
    </location>
    <ligand>
        <name>4-imidazolone-5-propanoate</name>
        <dbReference type="ChEBI" id="CHEBI:77893"/>
    </ligand>
</feature>
<feature type="binding site" evidence="1">
    <location>
        <position position="138"/>
    </location>
    <ligand>
        <name>N-formimidoyl-L-glutamate</name>
        <dbReference type="ChEBI" id="CHEBI:58928"/>
    </ligand>
</feature>
<feature type="binding site" evidence="1">
    <location>
        <position position="171"/>
    </location>
    <ligand>
        <name>4-imidazolone-5-propanoate</name>
        <dbReference type="ChEBI" id="CHEBI:77893"/>
    </ligand>
</feature>
<feature type="binding site" evidence="1">
    <location>
        <position position="236"/>
    </location>
    <ligand>
        <name>Fe(3+)</name>
        <dbReference type="ChEBI" id="CHEBI:29034"/>
    </ligand>
</feature>
<feature type="binding site" evidence="1">
    <location>
        <position position="236"/>
    </location>
    <ligand>
        <name>Zn(2+)</name>
        <dbReference type="ChEBI" id="CHEBI:29105"/>
    </ligand>
</feature>
<feature type="binding site" evidence="1">
    <location>
        <position position="239"/>
    </location>
    <ligand>
        <name>4-imidazolone-5-propanoate</name>
        <dbReference type="ChEBI" id="CHEBI:77893"/>
    </ligand>
</feature>
<feature type="binding site" evidence="1">
    <location>
        <position position="311"/>
    </location>
    <ligand>
        <name>Fe(3+)</name>
        <dbReference type="ChEBI" id="CHEBI:29034"/>
    </ligand>
</feature>
<feature type="binding site" evidence="1">
    <location>
        <position position="311"/>
    </location>
    <ligand>
        <name>Zn(2+)</name>
        <dbReference type="ChEBI" id="CHEBI:29105"/>
    </ligand>
</feature>
<feature type="binding site" evidence="1">
    <location>
        <position position="313"/>
    </location>
    <ligand>
        <name>N-formimidoyl-L-glutamate</name>
        <dbReference type="ChEBI" id="CHEBI:58928"/>
    </ligand>
</feature>
<feature type="binding site" evidence="1">
    <location>
        <position position="315"/>
    </location>
    <ligand>
        <name>N-formimidoyl-L-glutamate</name>
        <dbReference type="ChEBI" id="CHEBI:58928"/>
    </ligand>
</feature>
<feature type="binding site" evidence="1">
    <location>
        <position position="316"/>
    </location>
    <ligand>
        <name>4-imidazolone-5-propanoate</name>
        <dbReference type="ChEBI" id="CHEBI:77893"/>
    </ligand>
</feature>
<evidence type="ECO:0000255" key="1">
    <source>
        <dbReference type="HAMAP-Rule" id="MF_00372"/>
    </source>
</evidence>
<gene>
    <name evidence="1" type="primary">hutI</name>
    <name type="ordered locus">PSPTO_5277</name>
</gene>